<sequence length="256" mass="29470">MTEIKISKTEKKLRHYITKAIADYKLIEKGDKVMLCLSGGKDSFGLLKVLHGLIEDKTYDIDLHVYTLDQSQPGWDDSQLRKYLDNLGVSYEIETKNTYGVVIDKVPEGKTYCSLCSRLRRGNIYRYAKEHKMDKIILGHHRDDLIESLLMSILYQGQIKSMPPKFITQDGENTVIRPMVLVQERDLIEFAKEENFPIIPCNLCGSQENLKRKKVKKLIQDLAHENPKVPSNILNSLSNVLPSHLMDRDLLNIIQN</sequence>
<keyword id="KW-0004">4Fe-4S</keyword>
<keyword id="KW-0067">ATP-binding</keyword>
<keyword id="KW-0963">Cytoplasm</keyword>
<keyword id="KW-0408">Iron</keyword>
<keyword id="KW-0411">Iron-sulfur</keyword>
<keyword id="KW-0460">Magnesium</keyword>
<keyword id="KW-0479">Metal-binding</keyword>
<keyword id="KW-0547">Nucleotide-binding</keyword>
<keyword id="KW-0694">RNA-binding</keyword>
<keyword id="KW-0808">Transferase</keyword>
<keyword id="KW-0819">tRNA processing</keyword>
<keyword id="KW-0820">tRNA-binding</keyword>
<protein>
    <recommendedName>
        <fullName evidence="1">tRNA-cytidine(32) 2-sulfurtransferase 1</fullName>
        <ecNumber evidence="1">2.8.1.-</ecNumber>
    </recommendedName>
    <alternativeName>
        <fullName evidence="1">Two-thiocytidine biosynthesis protein A 1</fullName>
    </alternativeName>
    <alternativeName>
        <fullName evidence="1">tRNA 2-thiocytidine biosynthesis protein TtcA 1</fullName>
    </alternativeName>
</protein>
<gene>
    <name evidence="1" type="primary">ttcA1</name>
    <name type="ordered locus">Fphi_0057</name>
</gene>
<dbReference type="EC" id="2.8.1.-" evidence="1"/>
<dbReference type="EMBL" id="CP000937">
    <property type="protein sequence ID" value="ABZ86277.1"/>
    <property type="molecule type" value="Genomic_DNA"/>
</dbReference>
<dbReference type="SMR" id="B0TY35"/>
<dbReference type="KEGG" id="fph:Fphi_0057"/>
<dbReference type="eggNOG" id="COG0037">
    <property type="taxonomic scope" value="Bacteria"/>
</dbReference>
<dbReference type="HOGENOM" id="CLU_026481_0_0_6"/>
<dbReference type="GO" id="GO:0005737">
    <property type="term" value="C:cytoplasm"/>
    <property type="evidence" value="ECO:0007669"/>
    <property type="project" value="UniProtKB-SubCell"/>
</dbReference>
<dbReference type="GO" id="GO:0051539">
    <property type="term" value="F:4 iron, 4 sulfur cluster binding"/>
    <property type="evidence" value="ECO:0007669"/>
    <property type="project" value="UniProtKB-UniRule"/>
</dbReference>
<dbReference type="GO" id="GO:0005524">
    <property type="term" value="F:ATP binding"/>
    <property type="evidence" value="ECO:0007669"/>
    <property type="project" value="UniProtKB-UniRule"/>
</dbReference>
<dbReference type="GO" id="GO:0000287">
    <property type="term" value="F:magnesium ion binding"/>
    <property type="evidence" value="ECO:0007669"/>
    <property type="project" value="UniProtKB-UniRule"/>
</dbReference>
<dbReference type="GO" id="GO:0016783">
    <property type="term" value="F:sulfurtransferase activity"/>
    <property type="evidence" value="ECO:0007669"/>
    <property type="project" value="UniProtKB-UniRule"/>
</dbReference>
<dbReference type="GO" id="GO:0000049">
    <property type="term" value="F:tRNA binding"/>
    <property type="evidence" value="ECO:0007669"/>
    <property type="project" value="UniProtKB-KW"/>
</dbReference>
<dbReference type="GO" id="GO:0034227">
    <property type="term" value="P:tRNA thio-modification"/>
    <property type="evidence" value="ECO:0007669"/>
    <property type="project" value="UniProtKB-UniRule"/>
</dbReference>
<dbReference type="CDD" id="cd24138">
    <property type="entry name" value="TtcA-like"/>
    <property type="match status" value="1"/>
</dbReference>
<dbReference type="Gene3D" id="3.40.50.620">
    <property type="entry name" value="HUPs"/>
    <property type="match status" value="1"/>
</dbReference>
<dbReference type="HAMAP" id="MF_01850">
    <property type="entry name" value="TtcA"/>
    <property type="match status" value="1"/>
</dbReference>
<dbReference type="InterPro" id="IPR014729">
    <property type="entry name" value="Rossmann-like_a/b/a_fold"/>
</dbReference>
<dbReference type="InterPro" id="IPR011063">
    <property type="entry name" value="TilS/TtcA_N"/>
</dbReference>
<dbReference type="InterPro" id="IPR012089">
    <property type="entry name" value="tRNA_Cyd_32_2_STrfase"/>
</dbReference>
<dbReference type="InterPro" id="IPR035107">
    <property type="entry name" value="tRNA_thiolation_TtcA_Ctu1"/>
</dbReference>
<dbReference type="NCBIfam" id="NF007972">
    <property type="entry name" value="PRK10696.1"/>
    <property type="match status" value="1"/>
</dbReference>
<dbReference type="PANTHER" id="PTHR43686:SF1">
    <property type="entry name" value="AMINOTRAN_5 DOMAIN-CONTAINING PROTEIN"/>
    <property type="match status" value="1"/>
</dbReference>
<dbReference type="PANTHER" id="PTHR43686">
    <property type="entry name" value="SULFURTRANSFERASE-RELATED"/>
    <property type="match status" value="1"/>
</dbReference>
<dbReference type="Pfam" id="PF01171">
    <property type="entry name" value="ATP_bind_3"/>
    <property type="match status" value="1"/>
</dbReference>
<dbReference type="PIRSF" id="PIRSF004976">
    <property type="entry name" value="ATPase_YdaO"/>
    <property type="match status" value="1"/>
</dbReference>
<dbReference type="SUPFAM" id="SSF52402">
    <property type="entry name" value="Adenine nucleotide alpha hydrolases-like"/>
    <property type="match status" value="1"/>
</dbReference>
<proteinExistence type="inferred from homology"/>
<accession>B0TY35</accession>
<evidence type="ECO:0000255" key="1">
    <source>
        <dbReference type="HAMAP-Rule" id="MF_01850"/>
    </source>
</evidence>
<feature type="chain" id="PRO_0000348727" description="tRNA-cytidine(32) 2-sulfurtransferase 1">
    <location>
        <begin position="1"/>
        <end position="256"/>
    </location>
</feature>
<feature type="short sequence motif" description="PP-loop motif" evidence="1">
    <location>
        <begin position="38"/>
        <end position="43"/>
    </location>
</feature>
<feature type="binding site" evidence="1">
    <location>
        <position position="113"/>
    </location>
    <ligand>
        <name>[4Fe-4S] cluster</name>
        <dbReference type="ChEBI" id="CHEBI:49883"/>
    </ligand>
</feature>
<feature type="binding site" evidence="1">
    <location>
        <position position="116"/>
    </location>
    <ligand>
        <name>[4Fe-4S] cluster</name>
        <dbReference type="ChEBI" id="CHEBI:49883"/>
    </ligand>
</feature>
<feature type="binding site" evidence="1">
    <location>
        <position position="204"/>
    </location>
    <ligand>
        <name>[4Fe-4S] cluster</name>
        <dbReference type="ChEBI" id="CHEBI:49883"/>
    </ligand>
</feature>
<comment type="function">
    <text evidence="1">Catalyzes the ATP-dependent 2-thiolation of cytidine in position 32 of tRNA, to form 2-thiocytidine (s(2)C32). The sulfur atoms are provided by the cysteine/cysteine desulfurase (IscS) system.</text>
</comment>
<comment type="catalytic activity">
    <reaction evidence="1">
        <text>cytidine(32) in tRNA + S-sulfanyl-L-cysteinyl-[cysteine desulfurase] + AH2 + ATP = 2-thiocytidine(32) in tRNA + L-cysteinyl-[cysteine desulfurase] + A + AMP + diphosphate + H(+)</text>
        <dbReference type="Rhea" id="RHEA:57048"/>
        <dbReference type="Rhea" id="RHEA-COMP:10288"/>
        <dbReference type="Rhea" id="RHEA-COMP:12157"/>
        <dbReference type="Rhea" id="RHEA-COMP:12158"/>
        <dbReference type="Rhea" id="RHEA-COMP:14821"/>
        <dbReference type="ChEBI" id="CHEBI:13193"/>
        <dbReference type="ChEBI" id="CHEBI:15378"/>
        <dbReference type="ChEBI" id="CHEBI:17499"/>
        <dbReference type="ChEBI" id="CHEBI:29950"/>
        <dbReference type="ChEBI" id="CHEBI:30616"/>
        <dbReference type="ChEBI" id="CHEBI:33019"/>
        <dbReference type="ChEBI" id="CHEBI:61963"/>
        <dbReference type="ChEBI" id="CHEBI:82748"/>
        <dbReference type="ChEBI" id="CHEBI:141453"/>
        <dbReference type="ChEBI" id="CHEBI:456215"/>
    </reaction>
    <physiologicalReaction direction="left-to-right" evidence="1">
        <dbReference type="Rhea" id="RHEA:57049"/>
    </physiologicalReaction>
</comment>
<comment type="cofactor">
    <cofactor evidence="1">
        <name>Mg(2+)</name>
        <dbReference type="ChEBI" id="CHEBI:18420"/>
    </cofactor>
</comment>
<comment type="cofactor">
    <cofactor evidence="1">
        <name>[4Fe-4S] cluster</name>
        <dbReference type="ChEBI" id="CHEBI:49883"/>
    </cofactor>
    <text evidence="1">Binds 1 [4Fe-4S] cluster per subunit. The cluster is chelated by three Cys residues, the fourth Fe has a free coordination site that may bind a sulfur atom transferred from the persulfide of IscS.</text>
</comment>
<comment type="pathway">
    <text evidence="1">tRNA modification.</text>
</comment>
<comment type="subunit">
    <text evidence="1">Homodimer.</text>
</comment>
<comment type="subcellular location">
    <subcellularLocation>
        <location evidence="1">Cytoplasm</location>
    </subcellularLocation>
</comment>
<comment type="miscellaneous">
    <text evidence="1">The thiolation reaction likely consists of two steps: a first activation step by ATP to form an adenylated intermediate of the target base of tRNA, and a second nucleophilic substitution step of the sulfur (S) atom supplied by the hydrosulfide attached to the Fe-S cluster.</text>
</comment>
<comment type="similarity">
    <text evidence="1">Belongs to the TtcA family.</text>
</comment>
<reference key="1">
    <citation type="submission" date="2007-12" db="EMBL/GenBank/DDBJ databases">
        <title>Complete sequence of chromosome of Francisella philomiragia subsp. philomiragia ATCC 25017.</title>
        <authorList>
            <consortium name="US DOE Joint Genome Institute"/>
            <person name="Copeland A."/>
            <person name="Lucas S."/>
            <person name="Lapidus A."/>
            <person name="Barry K."/>
            <person name="Detter J.C."/>
            <person name="Glavina del Rio T."/>
            <person name="Hammon N."/>
            <person name="Israni S."/>
            <person name="Dalin E."/>
            <person name="Tice H."/>
            <person name="Pitluck S."/>
            <person name="Chain P."/>
            <person name="Malfatti S."/>
            <person name="Shin M."/>
            <person name="Vergez L."/>
            <person name="Schmutz J."/>
            <person name="Larimer F."/>
            <person name="Land M."/>
            <person name="Hauser L."/>
            <person name="Richardson P."/>
        </authorList>
    </citation>
    <scope>NUCLEOTIDE SEQUENCE [LARGE SCALE GENOMIC DNA]</scope>
    <source>
        <strain>ATCC 25017 / CCUG 19701 / FSC 153 / O#319-036</strain>
    </source>
</reference>
<organism>
    <name type="scientific">Francisella philomiragia subsp. philomiragia (strain ATCC 25017 / CCUG 19701 / FSC 153 / O#319-036)</name>
    <dbReference type="NCBI Taxonomy" id="484022"/>
    <lineage>
        <taxon>Bacteria</taxon>
        <taxon>Pseudomonadati</taxon>
        <taxon>Pseudomonadota</taxon>
        <taxon>Gammaproteobacteria</taxon>
        <taxon>Thiotrichales</taxon>
        <taxon>Francisellaceae</taxon>
        <taxon>Francisella</taxon>
    </lineage>
</organism>
<name>TTCA1_FRAP2</name>